<feature type="signal peptide" evidence="1">
    <location>
        <begin position="1"/>
        <end position="21"/>
    </location>
</feature>
<feature type="chain" id="PRO_5000006487" description="Beta-cardiotoxin CTX9">
    <location>
        <begin position="22"/>
        <end position="84"/>
    </location>
</feature>
<feature type="disulfide bond" evidence="1">
    <location>
        <begin position="24"/>
        <end position="43"/>
    </location>
</feature>
<feature type="disulfide bond" evidence="1">
    <location>
        <begin position="36"/>
        <end position="61"/>
    </location>
</feature>
<feature type="disulfide bond" evidence="1">
    <location>
        <begin position="65"/>
        <end position="76"/>
    </location>
</feature>
<feature type="disulfide bond" evidence="1">
    <location>
        <begin position="77"/>
        <end position="82"/>
    </location>
</feature>
<name>3SDC9_OPHHA</name>
<organism>
    <name type="scientific">Ophiophagus hannah</name>
    <name type="common">King cobra</name>
    <name type="synonym">Naja hannah</name>
    <dbReference type="NCBI Taxonomy" id="8665"/>
    <lineage>
        <taxon>Eukaryota</taxon>
        <taxon>Metazoa</taxon>
        <taxon>Chordata</taxon>
        <taxon>Craniata</taxon>
        <taxon>Vertebrata</taxon>
        <taxon>Euteleostomi</taxon>
        <taxon>Lepidosauria</taxon>
        <taxon>Squamata</taxon>
        <taxon>Bifurcata</taxon>
        <taxon>Unidentata</taxon>
        <taxon>Episquamata</taxon>
        <taxon>Toxicofera</taxon>
        <taxon>Serpentes</taxon>
        <taxon>Colubroidea</taxon>
        <taxon>Elapidae</taxon>
        <taxon>Elapinae</taxon>
        <taxon>Ophiophagus</taxon>
    </lineage>
</organism>
<comment type="function">
    <text evidence="1">Acts as a beta-blocker by binding to beta-1 and beta-2 adrenergic receptors (ADRB1 and ADRB2). It dose-dependently decreases the heart rate (bradycardia), whereas conventional cardiotoxins increases it. At 100 mg/kg, intraperitoneal injection into mice provokes labored breathing, impaired locomotion, lack of response to external stimuli, and death (after 30 minutes).</text>
</comment>
<comment type="subcellular location">
    <subcellularLocation>
        <location evidence="2">Secreted</location>
    </subcellularLocation>
</comment>
<comment type="tissue specificity">
    <text evidence="4">Expressed by the venom gland.</text>
</comment>
<comment type="miscellaneous">
    <text evidence="1">Negative results: does not affect blood coagulation and does not show significant hemolytic activity.</text>
</comment>
<comment type="miscellaneous">
    <text evidence="3">Is classified as a P-type cytotoxin, since a proline residue stands at position 52 (Pro-31 in standard classification).</text>
</comment>
<comment type="similarity">
    <text evidence="3">Belongs to the three-finger toxin family. Short-chain subfamily. Aminergic toxin sub-subfamily.</text>
</comment>
<dbReference type="EMBL" id="DQ273577">
    <property type="protein sequence ID" value="ABB83631.1"/>
    <property type="molecule type" value="mRNA"/>
</dbReference>
<dbReference type="SMR" id="Q2VBN8"/>
<dbReference type="TopDownProteomics" id="Q2VBN8"/>
<dbReference type="GO" id="GO:0005576">
    <property type="term" value="C:extracellular region"/>
    <property type="evidence" value="ECO:0007669"/>
    <property type="project" value="UniProtKB-SubCell"/>
</dbReference>
<dbReference type="GO" id="GO:0090729">
    <property type="term" value="F:toxin activity"/>
    <property type="evidence" value="ECO:0007669"/>
    <property type="project" value="UniProtKB-KW"/>
</dbReference>
<dbReference type="CDD" id="cd00206">
    <property type="entry name" value="TFP_snake_toxin"/>
    <property type="match status" value="1"/>
</dbReference>
<dbReference type="FunFam" id="2.10.60.10:FF:000024">
    <property type="entry name" value="Cytotoxin 1"/>
    <property type="match status" value="1"/>
</dbReference>
<dbReference type="Gene3D" id="2.10.60.10">
    <property type="entry name" value="CD59"/>
    <property type="match status" value="1"/>
</dbReference>
<dbReference type="InterPro" id="IPR003572">
    <property type="entry name" value="Cytotoxin_Cobra"/>
</dbReference>
<dbReference type="InterPro" id="IPR003571">
    <property type="entry name" value="Snake_3FTx"/>
</dbReference>
<dbReference type="InterPro" id="IPR045860">
    <property type="entry name" value="Snake_toxin-like_sf"/>
</dbReference>
<dbReference type="InterPro" id="IPR018354">
    <property type="entry name" value="Snake_toxin_con_site"/>
</dbReference>
<dbReference type="InterPro" id="IPR054131">
    <property type="entry name" value="Toxin_cobra-type"/>
</dbReference>
<dbReference type="Pfam" id="PF21947">
    <property type="entry name" value="Toxin_cobra-type"/>
    <property type="match status" value="1"/>
</dbReference>
<dbReference type="PRINTS" id="PR00282">
    <property type="entry name" value="CYTOTOXIN"/>
</dbReference>
<dbReference type="SUPFAM" id="SSF57302">
    <property type="entry name" value="Snake toxin-like"/>
    <property type="match status" value="1"/>
</dbReference>
<dbReference type="PROSITE" id="PS00272">
    <property type="entry name" value="SNAKE_TOXIN"/>
    <property type="match status" value="1"/>
</dbReference>
<keyword id="KW-0123">Cardiotoxin</keyword>
<keyword id="KW-1015">Disulfide bond</keyword>
<keyword id="KW-1213">G-protein coupled receptor impairing toxin</keyword>
<keyword id="KW-0964">Secreted</keyword>
<keyword id="KW-0732">Signal</keyword>
<keyword id="KW-0800">Toxin</keyword>
<proteinExistence type="evidence at protein level"/>
<reference key="1">
    <citation type="journal article" date="2006" name="Biochem. J.">
        <title>Novel genes encoding six kinds of three-finger toxins in Ophiophagus hannah (king cobra) and function characterization of two recombinant long-chain neurotoxins.</title>
        <authorList>
            <person name="Li J."/>
            <person name="Zhang H."/>
            <person name="Liu J."/>
            <person name="Xu K."/>
        </authorList>
    </citation>
    <scope>NUCLEOTIDE SEQUENCE [MRNA]</scope>
    <source>
        <tissue>Venom gland</tissue>
    </source>
</reference>
<reference key="2">
    <citation type="journal article" date="2013" name="Proc. Natl. Acad. Sci. U.S.A.">
        <title>The king cobra genome reveals dynamic gene evolution and adaptation in the snake venom system.</title>
        <authorList>
            <person name="Vonk F.J."/>
            <person name="Casewell N.R."/>
            <person name="Henkel C.V."/>
            <person name="Heimberg A.M."/>
            <person name="Jansen H.J."/>
            <person name="McCleary R.J."/>
            <person name="Kerkkamp H.M."/>
            <person name="Vos R.A."/>
            <person name="Guerreiro I."/>
            <person name="Calvete J.J."/>
            <person name="Wuster W."/>
            <person name="Woods A.E."/>
            <person name="Logan J.M."/>
            <person name="Harrison R.A."/>
            <person name="Castoe T.A."/>
            <person name="de Koning A.P."/>
            <person name="Pollock D.D."/>
            <person name="Yandell M."/>
            <person name="Calderon D."/>
            <person name="Renjifo C."/>
            <person name="Currier R.B."/>
            <person name="Salgado D."/>
            <person name="Pla D."/>
            <person name="Sanz L."/>
            <person name="Hyder A.S."/>
            <person name="Ribeiro J.M."/>
            <person name="Arntzen J.W."/>
            <person name="van den Thillart G.E."/>
            <person name="Boetzer M."/>
            <person name="Pirovano W."/>
            <person name="Dirks R.P."/>
            <person name="Spaink H.P."/>
            <person name="Duboule D."/>
            <person name="McGlinn E."/>
            <person name="Kini R.M."/>
            <person name="Richardson M.K."/>
        </authorList>
    </citation>
    <scope>IDENTIFICATION BY MASS SPECTROMETRY</scope>
    <scope>SUBCELLULAR LOCATION</scope>
    <source>
        <tissue>Venom</tissue>
    </source>
</reference>
<accession>Q2VBN8</accession>
<protein>
    <recommendedName>
        <fullName>Beta-cardiotoxin CTX9</fullName>
    </recommendedName>
</protein>
<sequence length="84" mass="9380">MKTLLLTLVVVTIVCLDLGYTRKCLNTPLPLIYKTCPIGQDRCIKMTIKKLPSKYDVIRGCIDICPKSSADVEVLCCDTNKCNK</sequence>
<evidence type="ECO:0000250" key="1">
    <source>
        <dbReference type="UniProtKB" id="Q69CK0"/>
    </source>
</evidence>
<evidence type="ECO:0000269" key="2">
    <source>
    </source>
</evidence>
<evidence type="ECO:0000305" key="3"/>
<evidence type="ECO:0000305" key="4">
    <source>
    </source>
</evidence>